<accession>Q8BUE4</accession>
<accession>Q8CHZ2</accession>
<reference evidence="9 11" key="1">
    <citation type="journal article" date="2005" name="Science">
        <title>The transcriptional landscape of the mammalian genome.</title>
        <authorList>
            <person name="Carninci P."/>
            <person name="Kasukawa T."/>
            <person name="Katayama S."/>
            <person name="Gough J."/>
            <person name="Frith M.C."/>
            <person name="Maeda N."/>
            <person name="Oyama R."/>
            <person name="Ravasi T."/>
            <person name="Lenhard B."/>
            <person name="Wells C."/>
            <person name="Kodzius R."/>
            <person name="Shimokawa K."/>
            <person name="Bajic V.B."/>
            <person name="Brenner S.E."/>
            <person name="Batalov S."/>
            <person name="Forrest A.R."/>
            <person name="Zavolan M."/>
            <person name="Davis M.J."/>
            <person name="Wilming L.G."/>
            <person name="Aidinis V."/>
            <person name="Allen J.E."/>
            <person name="Ambesi-Impiombato A."/>
            <person name="Apweiler R."/>
            <person name="Aturaliya R.N."/>
            <person name="Bailey T.L."/>
            <person name="Bansal M."/>
            <person name="Baxter L."/>
            <person name="Beisel K.W."/>
            <person name="Bersano T."/>
            <person name="Bono H."/>
            <person name="Chalk A.M."/>
            <person name="Chiu K.P."/>
            <person name="Choudhary V."/>
            <person name="Christoffels A."/>
            <person name="Clutterbuck D.R."/>
            <person name="Crowe M.L."/>
            <person name="Dalla E."/>
            <person name="Dalrymple B.P."/>
            <person name="de Bono B."/>
            <person name="Della Gatta G."/>
            <person name="di Bernardo D."/>
            <person name="Down T."/>
            <person name="Engstrom P."/>
            <person name="Fagiolini M."/>
            <person name="Faulkner G."/>
            <person name="Fletcher C.F."/>
            <person name="Fukushima T."/>
            <person name="Furuno M."/>
            <person name="Futaki S."/>
            <person name="Gariboldi M."/>
            <person name="Georgii-Hemming P."/>
            <person name="Gingeras T.R."/>
            <person name="Gojobori T."/>
            <person name="Green R.E."/>
            <person name="Gustincich S."/>
            <person name="Harbers M."/>
            <person name="Hayashi Y."/>
            <person name="Hensch T.K."/>
            <person name="Hirokawa N."/>
            <person name="Hill D."/>
            <person name="Huminiecki L."/>
            <person name="Iacono M."/>
            <person name="Ikeo K."/>
            <person name="Iwama A."/>
            <person name="Ishikawa T."/>
            <person name="Jakt M."/>
            <person name="Kanapin A."/>
            <person name="Katoh M."/>
            <person name="Kawasawa Y."/>
            <person name="Kelso J."/>
            <person name="Kitamura H."/>
            <person name="Kitano H."/>
            <person name="Kollias G."/>
            <person name="Krishnan S.P."/>
            <person name="Kruger A."/>
            <person name="Kummerfeld S.K."/>
            <person name="Kurochkin I.V."/>
            <person name="Lareau L.F."/>
            <person name="Lazarevic D."/>
            <person name="Lipovich L."/>
            <person name="Liu J."/>
            <person name="Liuni S."/>
            <person name="McWilliam S."/>
            <person name="Madan Babu M."/>
            <person name="Madera M."/>
            <person name="Marchionni L."/>
            <person name="Matsuda H."/>
            <person name="Matsuzawa S."/>
            <person name="Miki H."/>
            <person name="Mignone F."/>
            <person name="Miyake S."/>
            <person name="Morris K."/>
            <person name="Mottagui-Tabar S."/>
            <person name="Mulder N."/>
            <person name="Nakano N."/>
            <person name="Nakauchi H."/>
            <person name="Ng P."/>
            <person name="Nilsson R."/>
            <person name="Nishiguchi S."/>
            <person name="Nishikawa S."/>
            <person name="Nori F."/>
            <person name="Ohara O."/>
            <person name="Okazaki Y."/>
            <person name="Orlando V."/>
            <person name="Pang K.C."/>
            <person name="Pavan W.J."/>
            <person name="Pavesi G."/>
            <person name="Pesole G."/>
            <person name="Petrovsky N."/>
            <person name="Piazza S."/>
            <person name="Reed J."/>
            <person name="Reid J.F."/>
            <person name="Ring B.Z."/>
            <person name="Ringwald M."/>
            <person name="Rost B."/>
            <person name="Ruan Y."/>
            <person name="Salzberg S.L."/>
            <person name="Sandelin A."/>
            <person name="Schneider C."/>
            <person name="Schoenbach C."/>
            <person name="Sekiguchi K."/>
            <person name="Semple C.A."/>
            <person name="Seno S."/>
            <person name="Sessa L."/>
            <person name="Sheng Y."/>
            <person name="Shibata Y."/>
            <person name="Shimada H."/>
            <person name="Shimada K."/>
            <person name="Silva D."/>
            <person name="Sinclair B."/>
            <person name="Sperling S."/>
            <person name="Stupka E."/>
            <person name="Sugiura K."/>
            <person name="Sultana R."/>
            <person name="Takenaka Y."/>
            <person name="Taki K."/>
            <person name="Tammoja K."/>
            <person name="Tan S.L."/>
            <person name="Tang S."/>
            <person name="Taylor M.S."/>
            <person name="Tegner J."/>
            <person name="Teichmann S.A."/>
            <person name="Ueda H.R."/>
            <person name="van Nimwegen E."/>
            <person name="Verardo R."/>
            <person name="Wei C.L."/>
            <person name="Yagi K."/>
            <person name="Yamanishi H."/>
            <person name="Zabarovsky E."/>
            <person name="Zhu S."/>
            <person name="Zimmer A."/>
            <person name="Hide W."/>
            <person name="Bult C."/>
            <person name="Grimmond S.M."/>
            <person name="Teasdale R.D."/>
            <person name="Liu E.T."/>
            <person name="Brusic V."/>
            <person name="Quackenbush J."/>
            <person name="Wahlestedt C."/>
            <person name="Mattick J.S."/>
            <person name="Hume D.A."/>
            <person name="Kai C."/>
            <person name="Sasaki D."/>
            <person name="Tomaru Y."/>
            <person name="Fukuda S."/>
            <person name="Kanamori-Katayama M."/>
            <person name="Suzuki M."/>
            <person name="Aoki J."/>
            <person name="Arakawa T."/>
            <person name="Iida J."/>
            <person name="Imamura K."/>
            <person name="Itoh M."/>
            <person name="Kato T."/>
            <person name="Kawaji H."/>
            <person name="Kawagashira N."/>
            <person name="Kawashima T."/>
            <person name="Kojima M."/>
            <person name="Kondo S."/>
            <person name="Konno H."/>
            <person name="Nakano K."/>
            <person name="Ninomiya N."/>
            <person name="Nishio T."/>
            <person name="Okada M."/>
            <person name="Plessy C."/>
            <person name="Shibata K."/>
            <person name="Shiraki T."/>
            <person name="Suzuki S."/>
            <person name="Tagami M."/>
            <person name="Waki K."/>
            <person name="Watahiki A."/>
            <person name="Okamura-Oho Y."/>
            <person name="Suzuki H."/>
            <person name="Kawai J."/>
            <person name="Hayashizaki Y."/>
        </authorList>
    </citation>
    <scope>NUCLEOTIDE SEQUENCE [LARGE SCALE MRNA] (ISOFORM 1)</scope>
    <source>
        <strain evidence="11">C57BL/6J</strain>
        <strain evidence="13">NOD</strain>
        <tissue evidence="13">Dendritic cell</tissue>
        <tissue evidence="11">Mammary gland</tissue>
        <tissue evidence="12">Melanocyte</tissue>
    </source>
</reference>
<reference key="2">
    <citation type="journal article" date="2009" name="PLoS Biol.">
        <title>Lineage-specific biology revealed by a finished genome assembly of the mouse.</title>
        <authorList>
            <person name="Church D.M."/>
            <person name="Goodstadt L."/>
            <person name="Hillier L.W."/>
            <person name="Zody M.C."/>
            <person name="Goldstein S."/>
            <person name="She X."/>
            <person name="Bult C.J."/>
            <person name="Agarwala R."/>
            <person name="Cherry J.L."/>
            <person name="DiCuccio M."/>
            <person name="Hlavina W."/>
            <person name="Kapustin Y."/>
            <person name="Meric P."/>
            <person name="Maglott D."/>
            <person name="Birtle Z."/>
            <person name="Marques A.C."/>
            <person name="Graves T."/>
            <person name="Zhou S."/>
            <person name="Teague B."/>
            <person name="Potamousis K."/>
            <person name="Churas C."/>
            <person name="Place M."/>
            <person name="Herschleb J."/>
            <person name="Runnheim R."/>
            <person name="Forrest D."/>
            <person name="Amos-Landgraf J."/>
            <person name="Schwartz D.C."/>
            <person name="Cheng Z."/>
            <person name="Lindblad-Toh K."/>
            <person name="Eichler E.E."/>
            <person name="Ponting C.P."/>
        </authorList>
    </citation>
    <scope>NUCLEOTIDE SEQUENCE [LARGE SCALE GENOMIC DNA]</scope>
    <source>
        <strain>C57BL/6J</strain>
    </source>
</reference>
<reference evidence="9 10" key="3">
    <citation type="journal article" date="2004" name="Genome Res.">
        <title>The status, quality, and expansion of the NIH full-length cDNA project: the Mammalian Gene Collection (MGC).</title>
        <authorList>
            <consortium name="The MGC Project Team"/>
        </authorList>
    </citation>
    <scope>NUCLEOTIDE SEQUENCE [LARGE SCALE MRNA] (ISOFORM 2)</scope>
    <source>
        <strain evidence="10">C57BL/6J</strain>
        <tissue evidence="10">Mammary gland</tissue>
    </source>
</reference>
<reference evidence="9" key="4">
    <citation type="journal article" date="2006" name="Oncogene">
        <title>The p53-inducible apoptotic protein AMID is not required for normal development and tumor suppression.</title>
        <authorList>
            <person name="Mei J."/>
            <person name="Webb S."/>
            <person name="Zhang B."/>
            <person name="Shu H.-B."/>
        </authorList>
    </citation>
    <scope>TISSUE SPECIFICITY</scope>
    <scope>INDUCTION</scope>
</reference>
<reference key="5">
    <citation type="journal article" date="2010" name="Cell">
        <title>A tissue-specific atlas of mouse protein phosphorylation and expression.</title>
        <authorList>
            <person name="Huttlin E.L."/>
            <person name="Jedrychowski M.P."/>
            <person name="Elias J.E."/>
            <person name="Goswami T."/>
            <person name="Rad R."/>
            <person name="Beausoleil S.A."/>
            <person name="Villen J."/>
            <person name="Haas W."/>
            <person name="Sowa M.E."/>
            <person name="Gygi S.P."/>
        </authorList>
    </citation>
    <scope>IDENTIFICATION BY MASS SPECTROMETRY [LARGE SCALE ANALYSIS]</scope>
    <source>
        <tissue>Brown adipose tissue</tissue>
        <tissue>Heart</tissue>
        <tissue>Kidney</tissue>
        <tissue>Lung</tissue>
        <tissue>Spleen</tissue>
    </source>
</reference>
<reference key="6">
    <citation type="journal article" date="2016" name="Free Radic. Biol. Med.">
        <title>Novel role of 4-hydroxy-2-nonenal in AIFm2-mediated mitochondrial stress signaling.</title>
        <authorList>
            <person name="Miriyala S."/>
            <person name="Thippakorn C."/>
            <person name="Chaiswing L."/>
            <person name="Xu Y."/>
            <person name="Noel T."/>
            <person name="Tovmasyan A."/>
            <person name="Batinic-Haberle I."/>
            <person name="Vander Kooi C.W."/>
            <person name="Chi W."/>
            <person name="Latif A.A."/>
            <person name="Panchatcharam M."/>
            <person name="Prachayasittikul V."/>
            <person name="Butterfield D.A."/>
            <person name="Vore M."/>
            <person name="Moscow J."/>
            <person name="St Clair D.K."/>
        </authorList>
    </citation>
    <scope>FUNCTION</scope>
    <scope>SUBCELLULAR LOCATION</scope>
    <scope>TISSUE SPECIFICITY</scope>
    <scope>INTERACTION WITH KPNA2 AND IPO5</scope>
    <scope>ACTIVITY REGULATION BY 4-HYDROXY-2-NONENAL</scope>
    <scope>SITE</scope>
    <scope>MUTAGENESIS OF HIS-174 AND CYS-187</scope>
    <scope>INDUCTION BY DOXORUBICIN</scope>
</reference>
<reference key="7">
    <citation type="journal article" date="2022" name="Nature">
        <title>A non-canonical vitamin K cycle is a potent ferroptosis suppressor.</title>
        <authorList>
            <person name="Mishima E."/>
            <person name="Ito J."/>
            <person name="Wu Z."/>
            <person name="Nakamura T."/>
            <person name="Wahida A."/>
            <person name="Doll S."/>
            <person name="Tonnus W."/>
            <person name="Nepachalovich P."/>
            <person name="Eggenhofer E."/>
            <person name="Aldrovandi M."/>
            <person name="Henkelmann B."/>
            <person name="Yamada K.I."/>
            <person name="Wanninger J."/>
            <person name="Zilka O."/>
            <person name="Sato E."/>
            <person name="Feederle R."/>
            <person name="Hass D."/>
            <person name="Maida A."/>
            <person name="Mourao A.S.D."/>
            <person name="Linkermann A."/>
            <person name="Geissler E.K."/>
            <person name="Nakagawa K."/>
            <person name="Abe T."/>
            <person name="Fedorova M."/>
            <person name="Proneth B."/>
            <person name="Pratt D.A."/>
            <person name="Conrad M."/>
        </authorList>
    </citation>
    <scope>FUNCTION</scope>
</reference>
<gene>
    <name evidence="14" type="primary">Aifm2</name>
    <name type="synonym">Amid</name>
</gene>
<sequence length="373" mass="40635">MGSQVSVDTGAVHVVIVGGGFGGIAAASQLQALNVPFMLVDMKDSFHHNVAALRASVESGFAKKTFISYSATFKDNFRQGKVIGIDLKNRMVLLQGGEALPFSHLILATGSTGPFPGKFNEVSCQQAAIQAYEDMVKQIQRSQFIVVVGGGSAGVEMAAEIKTEYPEKEVTLIHSRVPLADKELLPCVRQEVKEILLRKGVQLLLSERVSNLEELPRNEYREYIKVETDKGTEVATNMVIVCNGIKINSSAYRSAFESRLASNGALKVNEFLQVEGYSNIYAIGDCADTKEPKMAYHAGLHANVAVANIVNSMKQRPLKAYKPGALTFLLSMGRNDGVGQISGFYVGRLMVRLAKSRDLLISTSWKTMRQSPP</sequence>
<proteinExistence type="evidence at protein level"/>
<organism>
    <name type="scientific">Mus musculus</name>
    <name type="common">Mouse</name>
    <dbReference type="NCBI Taxonomy" id="10090"/>
    <lineage>
        <taxon>Eukaryota</taxon>
        <taxon>Metazoa</taxon>
        <taxon>Chordata</taxon>
        <taxon>Craniata</taxon>
        <taxon>Vertebrata</taxon>
        <taxon>Euteleostomi</taxon>
        <taxon>Mammalia</taxon>
        <taxon>Eutheria</taxon>
        <taxon>Euarchontoglires</taxon>
        <taxon>Glires</taxon>
        <taxon>Rodentia</taxon>
        <taxon>Myomorpha</taxon>
        <taxon>Muroidea</taxon>
        <taxon>Muridae</taxon>
        <taxon>Murinae</taxon>
        <taxon>Mus</taxon>
        <taxon>Mus</taxon>
    </lineage>
</organism>
<name>FSP1_MOUSE</name>
<protein>
    <recommendedName>
        <fullName evidence="1">Ferroptosis suppressor protein 1</fullName>
        <shortName evidence="1">FSP1</shortName>
        <ecNumber evidence="1">1.6.5.-</ecNumber>
    </recommendedName>
    <alternativeName>
        <fullName evidence="1">Apoptosis-inducing factor homologous mitochondrion-associated inducer of death</fullName>
        <shortName evidence="1">AMID</shortName>
    </alternativeName>
    <alternativeName>
        <fullName evidence="1">p53-responsive gene 3 protein</fullName>
    </alternativeName>
</protein>
<keyword id="KW-0007">Acetylation</keyword>
<keyword id="KW-0025">Alternative splicing</keyword>
<keyword id="KW-1003">Cell membrane</keyword>
<keyword id="KW-0963">Cytoplasm</keyword>
<keyword id="KW-0274">FAD</keyword>
<keyword id="KW-0285">Flavoprotein</keyword>
<keyword id="KW-0551">Lipid droplet</keyword>
<keyword id="KW-0449">Lipoprotein</keyword>
<keyword id="KW-0472">Membrane</keyword>
<keyword id="KW-0496">Mitochondrion</keyword>
<keyword id="KW-0519">Myristate</keyword>
<keyword id="KW-0539">Nucleus</keyword>
<keyword id="KW-0560">Oxidoreductase</keyword>
<keyword id="KW-1185">Reference proteome</keyword>
<keyword id="KW-0812">Transmembrane</keyword>
<keyword id="KW-1133">Transmembrane helix</keyword>
<keyword id="KW-0832">Ubl conjugation</keyword>
<feature type="initiator methionine" description="Removed" evidence="1">
    <location>
        <position position="1"/>
    </location>
</feature>
<feature type="chain" id="PRO_0000238923" description="Ferroptosis suppressor protein 1">
    <location>
        <begin position="2"/>
        <end position="373"/>
    </location>
</feature>
<feature type="transmembrane region" description="Helical" evidence="2">
    <location>
        <begin position="7"/>
        <end position="27"/>
    </location>
</feature>
<feature type="binding site" evidence="2">
    <location>
        <begin position="18"/>
        <end position="22"/>
    </location>
    <ligand>
        <name>6-hydroxy-FAD</name>
        <dbReference type="ChEBI" id="CHEBI:60470"/>
    </ligand>
</feature>
<feature type="binding site" evidence="2">
    <location>
        <position position="54"/>
    </location>
    <ligand>
        <name>6-hydroxy-FAD</name>
        <dbReference type="ChEBI" id="CHEBI:60470"/>
    </ligand>
</feature>
<feature type="binding site" evidence="2">
    <location>
        <position position="82"/>
    </location>
    <ligand>
        <name>6-hydroxy-FAD</name>
        <dbReference type="ChEBI" id="CHEBI:60470"/>
    </ligand>
</feature>
<feature type="binding site" evidence="2">
    <location>
        <position position="285"/>
    </location>
    <ligand>
        <name>6-hydroxy-FAD</name>
        <dbReference type="ChEBI" id="CHEBI:60470"/>
    </ligand>
</feature>
<feature type="site" description="4-hydroxy-2-nonenal adduction" evidence="6">
    <location>
        <position position="174"/>
    </location>
</feature>
<feature type="site" description="4-hydroxy-2-nonenal adduction" evidence="6">
    <location>
        <position position="187"/>
    </location>
</feature>
<feature type="modified residue" description="N6-acetyllysine" evidence="1">
    <location>
        <position position="168"/>
    </location>
</feature>
<feature type="lipid moiety-binding region" description="N-myristoyl glycine" evidence="1">
    <location>
        <position position="2"/>
    </location>
</feature>
<feature type="splice variant" id="VSP_052049" description="In isoform 2." evidence="8">
    <original>GALTFLLSMGRNDGVGQISGFYVGRLMVRLAKSRDLLISTSWKTMRQSPP</original>
    <variation>ETDQPPAALSPALLLWTPARKLTLSEGRINYLQEAGHVRTLQSMAGLFSDRPCVISL</variation>
    <location>
        <begin position="324"/>
        <end position="373"/>
    </location>
</feature>
<feature type="mutagenesis site" description="Impairs the NADH oxidoreductase activity. Impairs mitochondria to nucleus translocation. Confers protection to doxorubicin-induced cytotoxicity." evidence="6">
    <original>H</original>
    <variation>R</variation>
    <location>
        <position position="174"/>
    </location>
</feature>
<feature type="mutagenesis site" description="Decreases the NADH oxidoreductase activity. Has not effect on mitochondria to nucleus translocation." evidence="6">
    <original>C</original>
    <variation>T</variation>
    <location>
        <position position="187"/>
    </location>
</feature>
<evidence type="ECO:0000250" key="1">
    <source>
        <dbReference type="UniProtKB" id="Q9BRQ8"/>
    </source>
</evidence>
<evidence type="ECO:0000255" key="2"/>
<evidence type="ECO:0000269" key="3">
    <source>
    </source>
</evidence>
<evidence type="ECO:0000269" key="4">
    <source>
    </source>
</evidence>
<evidence type="ECO:0000269" key="5">
    <source>
    </source>
</evidence>
<evidence type="ECO:0000269" key="6">
    <source>
    </source>
</evidence>
<evidence type="ECO:0000269" key="7">
    <source>
    </source>
</evidence>
<evidence type="ECO:0000303" key="8">
    <source>
    </source>
</evidence>
<evidence type="ECO:0000305" key="9"/>
<evidence type="ECO:0000312" key="10">
    <source>
        <dbReference type="EMBL" id="AAH38129.1"/>
    </source>
</evidence>
<evidence type="ECO:0000312" key="11">
    <source>
        <dbReference type="EMBL" id="BAC39497.1"/>
    </source>
</evidence>
<evidence type="ECO:0000312" key="12">
    <source>
        <dbReference type="EMBL" id="BAE28108.1"/>
    </source>
</evidence>
<evidence type="ECO:0000312" key="13">
    <source>
        <dbReference type="EMBL" id="BAE33142.1"/>
    </source>
</evidence>
<evidence type="ECO:0000312" key="14">
    <source>
        <dbReference type="MGI" id="MGI:1918611"/>
    </source>
</evidence>
<comment type="function">
    <text evidence="1 6 7">A NAD(P)H-dependent oxidoreductase that acts as a key inhibitor of ferroptosis (By similarity). At the plasma membrane, catalyzes reduction of coenzyme Q/ubiquinone-10 to ubiquinol-10, a lipophilic radical-trapping antioxidant that prevents lipid oxidative damage and consequently ferroptosis (By similarity). Acts in parallel to GPX4 to suppress phospholipid peroxidation and ferroptosis (By similarity). This anti-ferroptotic function is independent of cellular glutathione levels (By similarity). Also acts as a potent radical-trapping antioxidant by mediating warfarin-resistant vitamin K reduction in the canonical vitamin K cycle: catalyzes NAD(P)H-dependent reduction of vitamin K (phylloquinone, menaquinone-4 and menadione) to hydroquinone forms (PubMed:35922516). Hydroquinones act as potent radical-trapping antioxidants inhibitor of phospholipid peroxidation and ferroptosis (PubMed:26689472). May play a role in mitochondrial stress signaling (PubMed:26689472). Upon oxidative stress, associates with the lipid peroxidation end product 4-hydroxy-2-nonenal (HNE) forming a lipid adduct devoid of oxidoreductase activity, which then translocates from mitochondria into the nucleus triggering DNA damage and cell death (PubMed:26689472).</text>
</comment>
<comment type="catalytic activity">
    <reaction evidence="1">
        <text>ubiquinone-10 + NADH + H(+) = ubiquinol-10 + NAD(+)</text>
        <dbReference type="Rhea" id="RHEA:61984"/>
        <dbReference type="ChEBI" id="CHEBI:15378"/>
        <dbReference type="ChEBI" id="CHEBI:46245"/>
        <dbReference type="ChEBI" id="CHEBI:57540"/>
        <dbReference type="ChEBI" id="CHEBI:57945"/>
        <dbReference type="ChEBI" id="CHEBI:64183"/>
    </reaction>
    <physiologicalReaction direction="left-to-right" evidence="1">
        <dbReference type="Rhea" id="RHEA:61985"/>
    </physiologicalReaction>
</comment>
<comment type="catalytic activity">
    <reaction evidence="1">
        <text>phylloquinone + NADH + H(+) = phylloquinol + NAD(+)</text>
        <dbReference type="Rhea" id="RHEA:74075"/>
        <dbReference type="ChEBI" id="CHEBI:15378"/>
        <dbReference type="ChEBI" id="CHEBI:18067"/>
        <dbReference type="ChEBI" id="CHEBI:28433"/>
        <dbReference type="ChEBI" id="CHEBI:57540"/>
        <dbReference type="ChEBI" id="CHEBI:57945"/>
    </reaction>
    <physiologicalReaction direction="left-to-right" evidence="1">
        <dbReference type="Rhea" id="RHEA:74076"/>
    </physiologicalReaction>
</comment>
<comment type="catalytic activity">
    <reaction evidence="1">
        <text>menaquinone-4 + NADH + H(+) = menaquinol-4 + NAD(+)</text>
        <dbReference type="Rhea" id="RHEA:74079"/>
        <dbReference type="ChEBI" id="CHEBI:15378"/>
        <dbReference type="ChEBI" id="CHEBI:57540"/>
        <dbReference type="ChEBI" id="CHEBI:57945"/>
        <dbReference type="ChEBI" id="CHEBI:78277"/>
        <dbReference type="ChEBI" id="CHEBI:193091"/>
    </reaction>
    <physiologicalReaction direction="left-to-right" evidence="1">
        <dbReference type="Rhea" id="RHEA:74080"/>
    </physiologicalReaction>
</comment>
<comment type="catalytic activity">
    <reaction evidence="1">
        <text>menadione + NADH + H(+) = menadiol + NAD(+)</text>
        <dbReference type="Rhea" id="RHEA:69695"/>
        <dbReference type="ChEBI" id="CHEBI:6746"/>
        <dbReference type="ChEBI" id="CHEBI:15378"/>
        <dbReference type="ChEBI" id="CHEBI:28869"/>
        <dbReference type="ChEBI" id="CHEBI:57540"/>
        <dbReference type="ChEBI" id="CHEBI:57945"/>
    </reaction>
    <physiologicalReaction direction="left-to-right" evidence="1">
        <dbReference type="Rhea" id="RHEA:69696"/>
    </physiologicalReaction>
</comment>
<comment type="cofactor">
    <cofactor evidence="1">
        <name>6-hydroxy-FAD</name>
        <dbReference type="ChEBI" id="CHEBI:60470"/>
    </cofactor>
    <text evidence="1">Binds 6-hydroxy-FAD non-covalently.</text>
</comment>
<comment type="activity regulation">
    <text evidence="6">The modification by 4-hydroxy-2-nonenal (HNE) adduction in mitochondria results in loss of the oxidoreductase activity and activation of a novel function in mitochondrial oxidative stress signaling.</text>
</comment>
<comment type="subunit">
    <text evidence="6">Interacts with importin subunits KPNA2 and IPO5; this interaction likely mediates the translocation into the nucleus upon oxidative stress.</text>
</comment>
<comment type="subcellular location">
    <subcellularLocation>
        <location evidence="1">Lipid droplet</location>
    </subcellularLocation>
    <subcellularLocation>
        <location evidence="1">Cell membrane</location>
        <topology evidence="9">Lipid-anchor</topology>
    </subcellularLocation>
    <subcellularLocation>
        <location evidence="6">Cytoplasm</location>
    </subcellularLocation>
    <subcellularLocation>
        <location evidence="6">Mitochondrion membrane</location>
    </subcellularLocation>
    <subcellularLocation>
        <location evidence="6">Nucleus</location>
    </subcellularLocation>
</comment>
<comment type="alternative products">
    <event type="alternative splicing"/>
    <isoform>
        <id>Q8BUE4-1</id>
        <name evidence="4">1</name>
        <sequence type="displayed"/>
    </isoform>
    <isoform>
        <id>Q8BUE4-2</id>
        <name evidence="3">2</name>
        <sequence type="described" ref="VSP_052049"/>
    </isoform>
</comment>
<comment type="tissue specificity">
    <text evidence="5 6">Detected in most normal tissues as two transcripts of 1.8 and 4.0 kb in length, respectively. Highly expressed in liver, testis, and kidney, and expressed at lower levels in pancreas, spleen, brain and lung (PubMed:16186796). Expressed in heart (at protein level) (PubMed:26689472).</text>
</comment>
<comment type="induction">
    <text evidence="5 6">Expression is up-regulated in mouse embryonic fibroblasts by genotoxic reagents 5-fluorouracil and etoposide (PubMed:16186796). Up-regulated in cardiac cells by anticancer drug doxorubicin (PubMed:26689472).</text>
</comment>
<comment type="PTM">
    <text evidence="1">N-myristoylation at Gly-2 mediates the recruitment to lipid droplets and plasma membrane.</text>
</comment>
<comment type="PTM">
    <text evidence="1">Acetylation at Lys-168 prevents AIFM2 ubiquitination and degradation, thereby inhibiting ferroptosis. KAT2B mediates acetylation at Lys-168, while HDAC3 removes it.</text>
</comment>
<comment type="PTM">
    <text evidence="1">Ubiquitinated. AIFM2 undergoes 'Lys-29'-ubiquitination and proteasomal degradation, which is inhibited by acetylation at Lys-168.</text>
</comment>
<comment type="similarity">
    <text evidence="9">Belongs to the FAD-dependent oxidoreductase family.</text>
</comment>
<comment type="sequence caution" evidence="9">
    <molecule>Isoform 2</molecule>
    <conflict type="erroneous termination">
        <sequence resource="EMBL-CDS" id="AAH38129"/>
    </conflict>
    <text>Truncated C-terminus.</text>
</comment>
<dbReference type="EC" id="1.6.5.-" evidence="1"/>
<dbReference type="EMBL" id="AK085656">
    <property type="protein sequence ID" value="BAC39497.1"/>
    <property type="molecule type" value="mRNA"/>
</dbReference>
<dbReference type="EMBL" id="AK155240">
    <property type="protein sequence ID" value="BAE33142.1"/>
    <property type="molecule type" value="mRNA"/>
</dbReference>
<dbReference type="EMBL" id="AK147741">
    <property type="protein sequence ID" value="BAE28108.1"/>
    <property type="molecule type" value="mRNA"/>
</dbReference>
<dbReference type="EMBL" id="AC153136">
    <property type="status" value="NOT_ANNOTATED_CDS"/>
    <property type="molecule type" value="Genomic_DNA"/>
</dbReference>
<dbReference type="EMBL" id="BC038129">
    <property type="protein sequence ID" value="AAH38129.1"/>
    <property type="status" value="ALT_SEQ"/>
    <property type="molecule type" value="mRNA"/>
</dbReference>
<dbReference type="CCDS" id="CCDS23884.1">
    <molecule id="Q8BUE4-1"/>
</dbReference>
<dbReference type="CCDS" id="CCDS48576.1">
    <molecule id="Q8BUE4-2"/>
</dbReference>
<dbReference type="RefSeq" id="NP_001034283.1">
    <molecule id="Q8BUE4-1"/>
    <property type="nucleotide sequence ID" value="NM_001039194.3"/>
</dbReference>
<dbReference type="RefSeq" id="NP_001271229.1">
    <molecule id="Q8BUE4-1"/>
    <property type="nucleotide sequence ID" value="NM_001284300.1"/>
</dbReference>
<dbReference type="RefSeq" id="NP_722474.2">
    <molecule id="Q8BUE4-2"/>
    <property type="nucleotide sequence ID" value="NM_153779.2"/>
</dbReference>
<dbReference type="RefSeq" id="NP_835159.1">
    <molecule id="Q8BUE4-1"/>
    <property type="nucleotide sequence ID" value="NM_178058.4"/>
</dbReference>
<dbReference type="RefSeq" id="XP_006514187.1">
    <molecule id="Q8BUE4-1"/>
    <property type="nucleotide sequence ID" value="XM_006514124.5"/>
</dbReference>
<dbReference type="SMR" id="Q8BUE4"/>
<dbReference type="BioGRID" id="214662">
    <property type="interactions" value="4"/>
</dbReference>
<dbReference type="FunCoup" id="Q8BUE4">
    <property type="interactions" value="1015"/>
</dbReference>
<dbReference type="IntAct" id="Q8BUE4">
    <property type="interactions" value="1"/>
</dbReference>
<dbReference type="STRING" id="10090.ENSMUSP00000078998"/>
<dbReference type="iPTMnet" id="Q8BUE4"/>
<dbReference type="PhosphoSitePlus" id="Q8BUE4"/>
<dbReference type="jPOST" id="Q8BUE4"/>
<dbReference type="PaxDb" id="10090-ENSMUSP00000078998"/>
<dbReference type="PeptideAtlas" id="Q8BUE4"/>
<dbReference type="ProteomicsDB" id="296005">
    <molecule id="Q8BUE4-1"/>
</dbReference>
<dbReference type="ProteomicsDB" id="296006">
    <molecule id="Q8BUE4-2"/>
</dbReference>
<dbReference type="Pumba" id="Q8BUE4"/>
<dbReference type="Antibodypedia" id="14832">
    <property type="antibodies" value="290 antibodies from 36 providers"/>
</dbReference>
<dbReference type="DNASU" id="71361"/>
<dbReference type="Ensembl" id="ENSMUST00000067857.11">
    <molecule id="Q8BUE4-1"/>
    <property type="protein sequence ID" value="ENSMUSP00000070054.5"/>
    <property type="gene ID" value="ENSMUSG00000020085.16"/>
</dbReference>
<dbReference type="Ensembl" id="ENSMUST00000080099.6">
    <molecule id="Q8BUE4-2"/>
    <property type="protein sequence ID" value="ENSMUSP00000078998.6"/>
    <property type="gene ID" value="ENSMUSG00000020085.16"/>
</dbReference>
<dbReference type="Ensembl" id="ENSMUST00000099706.9">
    <molecule id="Q8BUE4-1"/>
    <property type="protein sequence ID" value="ENSMUSP00000097297.3"/>
    <property type="gene ID" value="ENSMUSG00000020085.16"/>
</dbReference>
<dbReference type="Ensembl" id="ENSMUST00000105455.9">
    <molecule id="Q8BUE4-1"/>
    <property type="protein sequence ID" value="ENSMUSP00000101095.3"/>
    <property type="gene ID" value="ENSMUSG00000020085.16"/>
</dbReference>
<dbReference type="GeneID" id="71361"/>
<dbReference type="KEGG" id="mmu:71361"/>
<dbReference type="UCSC" id="uc007fgi.2">
    <molecule id="Q8BUE4-1"/>
    <property type="organism name" value="mouse"/>
</dbReference>
<dbReference type="UCSC" id="uc007fgl.1">
    <molecule id="Q8BUE4-2"/>
    <property type="organism name" value="mouse"/>
</dbReference>
<dbReference type="AGR" id="MGI:1918611"/>
<dbReference type="CTD" id="84883"/>
<dbReference type="MGI" id="MGI:1918611">
    <property type="gene designation" value="Aifm2"/>
</dbReference>
<dbReference type="VEuPathDB" id="HostDB:ENSMUSG00000020085"/>
<dbReference type="eggNOG" id="KOG1336">
    <property type="taxonomic scope" value="Eukaryota"/>
</dbReference>
<dbReference type="GeneTree" id="ENSGT00390000004582"/>
<dbReference type="HOGENOM" id="CLU_019845_2_1_1"/>
<dbReference type="InParanoid" id="Q8BUE4"/>
<dbReference type="OMA" id="TWEIAPP"/>
<dbReference type="OrthoDB" id="36502at9989"/>
<dbReference type="PhylomeDB" id="Q8BUE4"/>
<dbReference type="TreeFam" id="TF329369"/>
<dbReference type="BioGRID-ORCS" id="71361">
    <property type="hits" value="2 hits in 75 CRISPR screens"/>
</dbReference>
<dbReference type="PRO" id="PR:Q8BUE4"/>
<dbReference type="Proteomes" id="UP000000589">
    <property type="component" value="Chromosome 10"/>
</dbReference>
<dbReference type="RNAct" id="Q8BUE4">
    <property type="molecule type" value="protein"/>
</dbReference>
<dbReference type="Bgee" id="ENSMUSG00000020085">
    <property type="expression patterns" value="Expressed in brown adipose tissue and 183 other cell types or tissues"/>
</dbReference>
<dbReference type="GO" id="GO:0005737">
    <property type="term" value="C:cytoplasm"/>
    <property type="evidence" value="ECO:0000314"/>
    <property type="project" value="UniProtKB"/>
</dbReference>
<dbReference type="GO" id="GO:0005829">
    <property type="term" value="C:cytosol"/>
    <property type="evidence" value="ECO:0000250"/>
    <property type="project" value="UniProtKB"/>
</dbReference>
<dbReference type="GO" id="GO:0005811">
    <property type="term" value="C:lipid droplet"/>
    <property type="evidence" value="ECO:0007669"/>
    <property type="project" value="UniProtKB-SubCell"/>
</dbReference>
<dbReference type="GO" id="GO:0031966">
    <property type="term" value="C:mitochondrial membrane"/>
    <property type="evidence" value="ECO:0000314"/>
    <property type="project" value="UniProtKB"/>
</dbReference>
<dbReference type="GO" id="GO:0005741">
    <property type="term" value="C:mitochondrial outer membrane"/>
    <property type="evidence" value="ECO:0000250"/>
    <property type="project" value="UniProtKB"/>
</dbReference>
<dbReference type="GO" id="GO:0005739">
    <property type="term" value="C:mitochondrion"/>
    <property type="evidence" value="ECO:0007005"/>
    <property type="project" value="MGI"/>
</dbReference>
<dbReference type="GO" id="GO:0005634">
    <property type="term" value="C:nucleus"/>
    <property type="evidence" value="ECO:0000314"/>
    <property type="project" value="UniProtKB"/>
</dbReference>
<dbReference type="GO" id="GO:0005886">
    <property type="term" value="C:plasma membrane"/>
    <property type="evidence" value="ECO:0007669"/>
    <property type="project" value="UniProtKB-SubCell"/>
</dbReference>
<dbReference type="GO" id="GO:0003677">
    <property type="term" value="F:DNA binding"/>
    <property type="evidence" value="ECO:0000250"/>
    <property type="project" value="UniProtKB"/>
</dbReference>
<dbReference type="GO" id="GO:0004174">
    <property type="term" value="F:electron-transferring-flavoprotein dehydrogenase activity"/>
    <property type="evidence" value="ECO:0000250"/>
    <property type="project" value="UniProtKB"/>
</dbReference>
<dbReference type="GO" id="GO:0050660">
    <property type="term" value="F:flavin adenine dinucleotide binding"/>
    <property type="evidence" value="ECO:0000250"/>
    <property type="project" value="UniProtKB"/>
</dbReference>
<dbReference type="GO" id="GO:0016655">
    <property type="term" value="F:oxidoreductase activity, acting on NAD(P)H, quinone or similar compound as acceptor"/>
    <property type="evidence" value="ECO:0000250"/>
    <property type="project" value="UniProtKB"/>
</dbReference>
<dbReference type="GO" id="GO:0008637">
    <property type="term" value="P:apoptotic mitochondrial changes"/>
    <property type="evidence" value="ECO:0000266"/>
    <property type="project" value="MGI"/>
</dbReference>
<dbReference type="GO" id="GO:1990748">
    <property type="term" value="P:cellular detoxification"/>
    <property type="evidence" value="ECO:0007669"/>
    <property type="project" value="Ensembl"/>
</dbReference>
<dbReference type="GO" id="GO:0110076">
    <property type="term" value="P:negative regulation of ferroptosis"/>
    <property type="evidence" value="ECO:0007669"/>
    <property type="project" value="Ensembl"/>
</dbReference>
<dbReference type="GO" id="GO:0043065">
    <property type="term" value="P:positive regulation of apoptotic process"/>
    <property type="evidence" value="ECO:0000250"/>
    <property type="project" value="UniProtKB"/>
</dbReference>
<dbReference type="GO" id="GO:1900407">
    <property type="term" value="P:regulation of cellular response to oxidative stress"/>
    <property type="evidence" value="ECO:0000315"/>
    <property type="project" value="UniProtKB"/>
</dbReference>
<dbReference type="GO" id="GO:0006743">
    <property type="term" value="P:ubiquinone metabolic process"/>
    <property type="evidence" value="ECO:0007669"/>
    <property type="project" value="Ensembl"/>
</dbReference>
<dbReference type="GO" id="GO:0042373">
    <property type="term" value="P:vitamin K metabolic process"/>
    <property type="evidence" value="ECO:0000250"/>
    <property type="project" value="UniProtKB"/>
</dbReference>
<dbReference type="FunFam" id="3.50.50.100:FF:000003">
    <property type="entry name" value="Apoptosis-inducing factor, mitochondrion-associated, 2"/>
    <property type="match status" value="1"/>
</dbReference>
<dbReference type="Gene3D" id="3.50.50.100">
    <property type="match status" value="1"/>
</dbReference>
<dbReference type="InterPro" id="IPR036188">
    <property type="entry name" value="FAD/NAD-bd_sf"/>
</dbReference>
<dbReference type="InterPro" id="IPR023753">
    <property type="entry name" value="FAD/NAD-binding_dom"/>
</dbReference>
<dbReference type="PANTHER" id="PTHR43735">
    <property type="entry name" value="APOPTOSIS-INDUCING FACTOR 1"/>
    <property type="match status" value="1"/>
</dbReference>
<dbReference type="PANTHER" id="PTHR43735:SF3">
    <property type="entry name" value="FERROPTOSIS SUPPRESSOR PROTEIN 1"/>
    <property type="match status" value="1"/>
</dbReference>
<dbReference type="Pfam" id="PF07992">
    <property type="entry name" value="Pyr_redox_2"/>
    <property type="match status" value="1"/>
</dbReference>
<dbReference type="PRINTS" id="PR00368">
    <property type="entry name" value="FADPNR"/>
</dbReference>
<dbReference type="PRINTS" id="PR00469">
    <property type="entry name" value="PNDRDTASEII"/>
</dbReference>
<dbReference type="SUPFAM" id="SSF51905">
    <property type="entry name" value="FAD/NAD(P)-binding domain"/>
    <property type="match status" value="1"/>
</dbReference>